<organism>
    <name type="scientific">Shigella sonnei (strain Ss046)</name>
    <dbReference type="NCBI Taxonomy" id="300269"/>
    <lineage>
        <taxon>Bacteria</taxon>
        <taxon>Pseudomonadati</taxon>
        <taxon>Pseudomonadota</taxon>
        <taxon>Gammaproteobacteria</taxon>
        <taxon>Enterobacterales</taxon>
        <taxon>Enterobacteriaceae</taxon>
        <taxon>Shigella</taxon>
    </lineage>
</organism>
<protein>
    <recommendedName>
        <fullName>Iron uptake system component EfeO</fullName>
    </recommendedName>
</protein>
<name>EFEO_SHISS</name>
<dbReference type="EMBL" id="CP000038">
    <property type="protein sequence ID" value="AAZ87765.1"/>
    <property type="molecule type" value="Genomic_DNA"/>
</dbReference>
<dbReference type="RefSeq" id="WP_000154398.1">
    <property type="nucleotide sequence ID" value="NC_007384.1"/>
</dbReference>
<dbReference type="SMR" id="Q3Z397"/>
<dbReference type="GeneID" id="93776391"/>
<dbReference type="KEGG" id="ssn:SSON_1037"/>
<dbReference type="HOGENOM" id="CLU_050342_2_1_6"/>
<dbReference type="Proteomes" id="UP000002529">
    <property type="component" value="Chromosome"/>
</dbReference>
<dbReference type="GO" id="GO:0042597">
    <property type="term" value="C:periplasmic space"/>
    <property type="evidence" value="ECO:0007669"/>
    <property type="project" value="UniProtKB-SubCell"/>
</dbReference>
<dbReference type="CDD" id="cd14656">
    <property type="entry name" value="Imelysin-like_EfeO"/>
    <property type="match status" value="1"/>
</dbReference>
<dbReference type="FunFam" id="1.20.1420.20:FF:000001">
    <property type="entry name" value="Iron uptake system component EfeO"/>
    <property type="match status" value="1"/>
</dbReference>
<dbReference type="FunFam" id="2.60.40.420:FF:000052">
    <property type="entry name" value="Iron uptake system component EfeO"/>
    <property type="match status" value="1"/>
</dbReference>
<dbReference type="Gene3D" id="2.60.40.420">
    <property type="entry name" value="Cupredoxins - blue copper proteins"/>
    <property type="match status" value="1"/>
</dbReference>
<dbReference type="Gene3D" id="1.20.1420.20">
    <property type="entry name" value="M75 peptidase, HXXE motif"/>
    <property type="match status" value="1"/>
</dbReference>
<dbReference type="InterPro" id="IPR008972">
    <property type="entry name" value="Cupredoxin"/>
</dbReference>
<dbReference type="InterPro" id="IPR050894">
    <property type="entry name" value="EfeM/EfeO_iron_uptake"/>
</dbReference>
<dbReference type="InterPro" id="IPR028096">
    <property type="entry name" value="EfeO_Cupredoxin"/>
</dbReference>
<dbReference type="InterPro" id="IPR018976">
    <property type="entry name" value="Imelysin-like"/>
</dbReference>
<dbReference type="InterPro" id="IPR034981">
    <property type="entry name" value="Imelysin-like_EfeO/Algp7"/>
</dbReference>
<dbReference type="InterPro" id="IPR038352">
    <property type="entry name" value="Imelysin_sf"/>
</dbReference>
<dbReference type="InterPro" id="IPR053377">
    <property type="entry name" value="Iron_uptake_EfeM/EfeO"/>
</dbReference>
<dbReference type="NCBIfam" id="NF041757">
    <property type="entry name" value="EfeO"/>
    <property type="match status" value="1"/>
</dbReference>
<dbReference type="NCBIfam" id="NF007697">
    <property type="entry name" value="PRK10378.1"/>
    <property type="match status" value="1"/>
</dbReference>
<dbReference type="PANTHER" id="PTHR39192">
    <property type="entry name" value="IRON UPTAKE SYSTEM COMPONENT EFEO"/>
    <property type="match status" value="1"/>
</dbReference>
<dbReference type="PANTHER" id="PTHR39192:SF1">
    <property type="entry name" value="IRON UPTAKE SYSTEM COMPONENT EFEO"/>
    <property type="match status" value="1"/>
</dbReference>
<dbReference type="Pfam" id="PF13473">
    <property type="entry name" value="Cupredoxin_1"/>
    <property type="match status" value="1"/>
</dbReference>
<dbReference type="Pfam" id="PF09375">
    <property type="entry name" value="Peptidase_M75"/>
    <property type="match status" value="1"/>
</dbReference>
<dbReference type="SUPFAM" id="SSF49503">
    <property type="entry name" value="Cupredoxins"/>
    <property type="match status" value="1"/>
</dbReference>
<comment type="function">
    <text evidence="1">Involved in Fe(2+) uptake. Could be an iron-binding and/or electron-transfer component (By similarity).</text>
</comment>
<comment type="subunit">
    <text evidence="1">Monomer. Part of a ferrous iron transporter composed of EfeU, EfeO and EfeB (By similarity).</text>
</comment>
<comment type="subcellular location">
    <subcellularLocation>
        <location evidence="1">Periplasm</location>
    </subcellularLocation>
</comment>
<comment type="similarity">
    <text evidence="3">Belongs to the EfeM/EfeO family.</text>
</comment>
<proteinExistence type="inferred from homology"/>
<gene>
    <name type="primary">efeO</name>
    <name type="ordered locus">SSON_1037</name>
</gene>
<evidence type="ECO:0000250" key="1"/>
<evidence type="ECO:0000255" key="2"/>
<evidence type="ECO:0000305" key="3"/>
<accession>Q3Z397</accession>
<reference key="1">
    <citation type="journal article" date="2005" name="Nucleic Acids Res.">
        <title>Genome dynamics and diversity of Shigella species, the etiologic agents of bacillary dysentery.</title>
        <authorList>
            <person name="Yang F."/>
            <person name="Yang J."/>
            <person name="Zhang X."/>
            <person name="Chen L."/>
            <person name="Jiang Y."/>
            <person name="Yan Y."/>
            <person name="Tang X."/>
            <person name="Wang J."/>
            <person name="Xiong Z."/>
            <person name="Dong J."/>
            <person name="Xue Y."/>
            <person name="Zhu Y."/>
            <person name="Xu X."/>
            <person name="Sun L."/>
            <person name="Chen S."/>
            <person name="Nie H."/>
            <person name="Peng J."/>
            <person name="Xu J."/>
            <person name="Wang Y."/>
            <person name="Yuan Z."/>
            <person name="Wen Y."/>
            <person name="Yao Z."/>
            <person name="Shen Y."/>
            <person name="Qiang B."/>
            <person name="Hou Y."/>
            <person name="Yu J."/>
            <person name="Jin Q."/>
        </authorList>
    </citation>
    <scope>NUCLEOTIDE SEQUENCE [LARGE SCALE GENOMIC DNA]</scope>
    <source>
        <strain>Ss046</strain>
    </source>
</reference>
<keyword id="KW-0574">Periplasm</keyword>
<keyword id="KW-1185">Reference proteome</keyword>
<keyword id="KW-0732">Signal</keyword>
<sequence length="375" mass="41138">MTINFRRNALQLSVAALFSSAFMANAADVPQVKVTVTDKQCEPMTITVNAGKTQFIIQNHSQKALEWEILKGVMVVEERENIAPGFSQKMTANLQPGEYDMTCGLLTNPKGKLIVKGEATADAAQSDALLSLGGAITAYKAYVMAETTQLVTDTKAFTDAIKAGDIEKAKALYAPTRQHYERIEPIAELFSDLDGSIDAREDDYEQKAADPKFTGFHRLEKALFGDNTTKGMDQYAEQLYTDVVDLQKRISELAFPPSKVVGGAAGLIEEVAASKISGEEDRYSHTDLWDFQANVEGSQKIVDLLRPQLQKANPELLAKVDANFKKVDTILAKYRTKDGFETYDKLTDADRNALKGPITALAEDLAQLRGVLGLD</sequence>
<feature type="signal peptide" evidence="2">
    <location>
        <begin position="1"/>
        <end position="26"/>
    </location>
</feature>
<feature type="chain" id="PRO_0000278560" description="Iron uptake system component EfeO">
    <location>
        <begin position="27"/>
        <end position="375"/>
    </location>
</feature>